<accession>Q96PS8</accession>
<accession>Q5VYD3</accession>
<accession>Q5VYD4</accession>
<accession>Q8NG70</accession>
<gene>
    <name evidence="14" type="primary">AQP10</name>
</gene>
<organism>
    <name type="scientific">Homo sapiens</name>
    <name type="common">Human</name>
    <dbReference type="NCBI Taxonomy" id="9606"/>
    <lineage>
        <taxon>Eukaryota</taxon>
        <taxon>Metazoa</taxon>
        <taxon>Chordata</taxon>
        <taxon>Craniata</taxon>
        <taxon>Vertebrata</taxon>
        <taxon>Euteleostomi</taxon>
        <taxon>Mammalia</taxon>
        <taxon>Eutheria</taxon>
        <taxon>Euarchontoglires</taxon>
        <taxon>Primates</taxon>
        <taxon>Haplorrhini</taxon>
        <taxon>Catarrhini</taxon>
        <taxon>Hominidae</taxon>
        <taxon>Homo</taxon>
    </lineage>
</organism>
<proteinExistence type="evidence at protein level"/>
<name>AQP10_HUMAN</name>
<protein>
    <recommendedName>
        <fullName evidence="11 12">Aquaporin-10</fullName>
        <shortName>AQP-10</shortName>
    </recommendedName>
    <alternativeName>
        <fullName evidence="9">Aquaglyceroporin-10</fullName>
    </alternativeName>
    <alternativeName>
        <fullName evidence="8">Small intestine aquaporin</fullName>
    </alternativeName>
</protein>
<sequence length="301" mass="31763">MVFTQAPAEIMGHLRIRSLLARQCLAEFLGVFVLMLLTQGAVAQAVTSGETKGNFFTMFLAGSLAVTIAIYVGGNVSGAHLNPAFSLAMCIVGRLPWVKLPIYILVQLLSAFCASGATYVLYHDALQNYTGGNLTVTGPKETASIFATYPAPYLSLNNGFLDQVLGTGMLIVGLLAILDRRNKGVPAGLEPVVVGMLILALGLSMGANCGIPLNPARDLGPRLFTYVAGWGPEVFSAGNGWWWVPVVAPLVGATVGTATYQLLVALHHPEGPEPAQDLVSAQHKASELETPASAQMLECKL</sequence>
<comment type="function">
    <text evidence="2 3 5 6 7">Aquaglyceroporins form homotetrameric transmembrane channels, with each monomer independently mediating glycerol and water transport across the plasma membrane along their osmotic gradient (PubMed:11573934, PubMed:12084581, PubMed:21733844, PubMed:23382902, PubMed:30420639). Could also be permeable to urea (PubMed:12084581). Among aquaglyceroporins, it exhibits a unique pH-gated glycerol transport activity, being more active at acidic pH. It most likely plays a central role in the efflux of glycerol formed during triglyceride hydrolysis in adipocytes and in glycerol uptake by enterocytes, as both processes occur and are stimulated at acidic pH (PubMed:11573934, PubMed:23382902, PubMed:30420639).</text>
</comment>
<comment type="catalytic activity">
    <reaction evidence="3 5 6 7">
        <text>glycerol(in) = glycerol(out)</text>
        <dbReference type="Rhea" id="RHEA:29675"/>
        <dbReference type="ChEBI" id="CHEBI:17754"/>
    </reaction>
</comment>
<comment type="catalytic activity">
    <reaction evidence="2 3 5 6 7">
        <text>H2O(in) = H2O(out)</text>
        <dbReference type="Rhea" id="RHEA:29667"/>
        <dbReference type="ChEBI" id="CHEBI:15377"/>
    </reaction>
</comment>
<comment type="catalytic activity">
    <reaction evidence="12">
        <text>urea(in) = urea(out)</text>
        <dbReference type="Rhea" id="RHEA:32799"/>
        <dbReference type="ChEBI" id="CHEBI:16199"/>
    </reaction>
</comment>
<comment type="activity regulation">
    <text evidence="7">Glycerol transport is regulated by pH, with the porin being permeable to glycerol at pH 5.5 but not at pH 7.4 (PubMed:30420639). Water permeability, however, is not influenced by pH.</text>
</comment>
<comment type="subunit">
    <text evidence="7">Homotetramer; each monomer provides an independent glycerol/water pore.</text>
</comment>
<comment type="interaction">
    <interactant intactId="EBI-12820279">
        <id>Q96PS8</id>
    </interactant>
    <interactant intactId="EBI-11343438">
        <id>Q3SXY8</id>
        <label>ARL13B</label>
    </interactant>
    <organismsDiffer>false</organismsDiffer>
    <experiments>3</experiments>
</comment>
<comment type="interaction">
    <interactant intactId="EBI-12820279">
        <id>Q96PS8</id>
    </interactant>
    <interactant intactId="EBI-1045797">
        <id>Q8N5K1</id>
        <label>CISD2</label>
    </interactant>
    <organismsDiffer>false</organismsDiffer>
    <experiments>3</experiments>
</comment>
<comment type="interaction">
    <interactant intactId="EBI-12820279">
        <id>Q96PS8</id>
    </interactant>
    <interactant intactId="EBI-6942903">
        <id>Q96BA8</id>
        <label>CREB3L1</label>
    </interactant>
    <organismsDiffer>false</organismsDiffer>
    <experiments>3</experiments>
</comment>
<comment type="interaction">
    <interactant intactId="EBI-12820279">
        <id>Q96PS8</id>
    </interactant>
    <interactant intactId="EBI-2680384">
        <id>Q9BQA9</id>
        <label>CYBC1</label>
    </interactant>
    <organismsDiffer>false</organismsDiffer>
    <experiments>3</experiments>
</comment>
<comment type="interaction">
    <interactant intactId="EBI-12820279">
        <id>Q96PS8</id>
    </interactant>
    <interactant intactId="EBI-781551">
        <id>Q9Y282</id>
        <label>ERGIC3</label>
    </interactant>
    <organismsDiffer>false</organismsDiffer>
    <experiments>3</experiments>
</comment>
<comment type="interaction">
    <interactant intactId="EBI-12820279">
        <id>Q96PS8</id>
    </interactant>
    <interactant intactId="EBI-13345167">
        <id>Q8TDT2</id>
        <label>GPR152</label>
    </interactant>
    <organismsDiffer>false</organismsDiffer>
    <experiments>3</experiments>
</comment>
<comment type="interaction">
    <interactant intactId="EBI-12820279">
        <id>Q96PS8</id>
    </interactant>
    <interactant intactId="EBI-2927498">
        <id>O60883</id>
        <label>GPR37L1</label>
    </interactant>
    <organismsDiffer>false</organismsDiffer>
    <experiments>3</experiments>
</comment>
<comment type="interaction">
    <interactant intactId="EBI-12820279">
        <id>Q96PS8</id>
    </interactant>
    <interactant intactId="EBI-8632435">
        <id>P43628</id>
        <label>KIR2DL3</label>
    </interactant>
    <organismsDiffer>false</organismsDiffer>
    <experiments>3</experiments>
</comment>
<comment type="interaction">
    <interactant intactId="EBI-12820279">
        <id>Q96PS8</id>
    </interactant>
    <interactant intactId="EBI-10329546">
        <id>Q9Y5Y7</id>
        <label>LYVE1</label>
    </interactant>
    <organismsDiffer>false</organismsDiffer>
    <experiments>3</experiments>
</comment>
<comment type="interaction">
    <interactant intactId="EBI-12820279">
        <id>Q96PS8</id>
    </interactant>
    <interactant intactId="EBI-724754">
        <id>O14880</id>
        <label>MGST3</label>
    </interactant>
    <organismsDiffer>false</organismsDiffer>
    <experiments>3</experiments>
</comment>
<comment type="interaction">
    <interactant intactId="EBI-12820279">
        <id>Q96PS8</id>
    </interactant>
    <interactant intactId="EBI-10969203">
        <id>O14524-2</id>
        <label>NEMP1</label>
    </interactant>
    <organismsDiffer>false</organismsDiffer>
    <experiments>3</experiments>
</comment>
<comment type="interaction">
    <interactant intactId="EBI-12820279">
        <id>Q96PS8</id>
    </interactant>
    <interactant intactId="EBI-1050125">
        <id>O15173</id>
        <label>PGRMC2</label>
    </interactant>
    <organismsDiffer>false</organismsDiffer>
    <experiments>3</experiments>
</comment>
<comment type="interaction">
    <interactant intactId="EBI-12820279">
        <id>Q96PS8</id>
    </interactant>
    <interactant intactId="EBI-12188331">
        <id>P60201-2</id>
        <label>PLP1</label>
    </interactant>
    <organismsDiffer>false</organismsDiffer>
    <experiments>3</experiments>
</comment>
<comment type="interaction">
    <interactant intactId="EBI-12820279">
        <id>Q96PS8</id>
    </interactant>
    <interactant intactId="EBI-3919694">
        <id>P15151</id>
        <label>PVR</label>
    </interactant>
    <organismsDiffer>false</organismsDiffer>
    <experiments>3</experiments>
</comment>
<comment type="interaction">
    <interactant intactId="EBI-12820279">
        <id>Q96PS8</id>
    </interactant>
    <interactant intactId="EBI-3920694">
        <id>Q9NR31</id>
        <label>SAR1A</label>
    </interactant>
    <organismsDiffer>false</organismsDiffer>
    <experiments>3</experiments>
</comment>
<comment type="interaction">
    <interactant intactId="EBI-12820279">
        <id>Q96PS8</id>
    </interactant>
    <interactant intactId="EBI-17247926">
        <id>Q9NY72</id>
        <label>SCN3B</label>
    </interactant>
    <organismsDiffer>false</organismsDiffer>
    <experiments>3</experiments>
</comment>
<comment type="interaction">
    <interactant intactId="EBI-12820279">
        <id>Q96PS8</id>
    </interactant>
    <interactant intactId="EBI-17280858">
        <id>Q8WWF3</id>
        <label>SSMEM1</label>
    </interactant>
    <organismsDiffer>false</organismsDiffer>
    <experiments>3</experiments>
</comment>
<comment type="interaction">
    <interactant intactId="EBI-12820279">
        <id>Q96PS8</id>
    </interactant>
    <interactant intactId="EBI-8032987">
        <id>Q8N9I0</id>
        <label>SYT2</label>
    </interactant>
    <organismsDiffer>false</organismsDiffer>
    <experiments>3</experiments>
</comment>
<comment type="interaction">
    <interactant intactId="EBI-12820279">
        <id>Q96PS8</id>
    </interactant>
    <interactant intactId="EBI-17684533">
        <id>Q9NRX6</id>
        <label>TMEM167B</label>
    </interactant>
    <organismsDiffer>false</organismsDiffer>
    <experiments>3</experiments>
</comment>
<comment type="subcellular location">
    <subcellularLocation>
        <location evidence="4">Apical cell membrane</location>
        <topology evidence="7">Multi-pass membrane protein</topology>
    </subcellularLocation>
    <subcellularLocation>
        <location evidence="2 3 6 7">Cell membrane</location>
        <topology evidence="7">Multi-pass membrane protein</topology>
    </subcellularLocation>
    <subcellularLocation>
        <location evidence="6">Lipid droplet</location>
    </subcellularLocation>
    <text evidence="6">Detected around lipid droplets.</text>
</comment>
<comment type="alternative products">
    <event type="alternative splicing"/>
    <isoform>
        <id>Q96PS8-1</id>
        <name>1</name>
        <sequence type="displayed"/>
    </isoform>
    <isoform>
        <id>Q96PS8-2</id>
        <name>2</name>
        <sequence type="described" ref="VSP_010211"/>
    </isoform>
</comment>
<comment type="tissue specificity">
    <text evidence="2 3 4 6">Detected in epithelial cells on villi in the ileum, and also in stomach, jejunum, colon, rectum, white adipose tissue and placenta (at protein level) (PubMed:15221416, PubMed:23382902). Expressed in duodenum and jejunum. Highest expression in absorptive epithelial cells at the tips of villi in the jejunum (PubMed:11573934, PubMed:12084581). Detected in subcutaneous adipose tissue (PubMed:23382902).</text>
</comment>
<comment type="domain">
    <text evidence="7">Aquaporins contain two tandem repeats each containing three membrane-spanning domains and a pore-forming loop with the signature motif Asn-Pro-Ala (NPA).</text>
</comment>
<comment type="PTM">
    <text evidence="5">N-glycosylation at Asn-133 increases the stability of the protein but has no effect on its activity.</text>
</comment>
<comment type="miscellaneous">
    <text evidence="5">In vitro, it can transport the dietary compounds erythritol and xylitol.</text>
</comment>
<comment type="similarity">
    <text evidence="10">Belongs to the MIP/aquaporin (TC 1.A.8) family.</text>
</comment>
<comment type="caution">
    <molecule>Isoform 2</molecule>
    <text evidence="2">Initial experiments showed that it is permeable to water but not to glycerol. However, this could be due to the pH conditions under which it was assessed rather than isoform specificity (PubMed:11573934).</text>
</comment>
<feature type="chain" id="PRO_0000063967" description="Aquaporin-10">
    <location>
        <begin position="1"/>
        <end position="301"/>
    </location>
</feature>
<feature type="topological domain" description="Cytoplasmic" evidence="7">
    <location>
        <begin position="1"/>
        <end position="22"/>
    </location>
</feature>
<feature type="transmembrane region" description="Helical; Name=1" evidence="7 15">
    <location>
        <begin position="23"/>
        <end position="41"/>
    </location>
</feature>
<feature type="topological domain" description="Extracellular" evidence="7">
    <location>
        <begin position="42"/>
        <end position="55"/>
    </location>
</feature>
<feature type="transmembrane region" description="Helical; Name=2" evidence="7 15">
    <location>
        <begin position="56"/>
        <end position="75"/>
    </location>
</feature>
<feature type="topological domain" description="Cytoplasmic" evidence="7">
    <location>
        <begin position="76"/>
        <end position="77"/>
    </location>
</feature>
<feature type="intramembrane region" description="Discontinuously helical" evidence="7 15">
    <location>
        <begin position="78"/>
        <end position="90"/>
    </location>
</feature>
<feature type="topological domain" description="Cytoplasmic" evidence="7">
    <location>
        <begin position="91"/>
        <end position="96"/>
    </location>
</feature>
<feature type="transmembrane region" description="Helical; Name=3" evidence="7 15">
    <location>
        <begin position="97"/>
        <end position="121"/>
    </location>
</feature>
<feature type="topological domain" description="Extracellular" evidence="7">
    <location>
        <begin position="122"/>
        <end position="158"/>
    </location>
</feature>
<feature type="transmembrane region" description="Helical; Name=4" evidence="7 15">
    <location>
        <begin position="159"/>
        <end position="176"/>
    </location>
</feature>
<feature type="topological domain" description="Cytoplasmic" evidence="7">
    <location>
        <begin position="177"/>
        <end position="188"/>
    </location>
</feature>
<feature type="transmembrane region" description="Helical; Name=5" evidence="7 15">
    <location>
        <begin position="189"/>
        <end position="205"/>
    </location>
</feature>
<feature type="topological domain" description="Extracellular" evidence="7">
    <location>
        <begin position="206"/>
        <end position="208"/>
    </location>
</feature>
<feature type="intramembrane region" description="Discontinuously helical" evidence="7 15">
    <location>
        <begin position="209"/>
        <end position="223"/>
    </location>
</feature>
<feature type="topological domain" description="Extracellular" evidence="7">
    <location>
        <begin position="224"/>
        <end position="241"/>
    </location>
</feature>
<feature type="transmembrane region" description="Helical; Name=6" evidence="7 15">
    <location>
        <begin position="242"/>
        <end position="262"/>
    </location>
</feature>
<feature type="topological domain" description="Cytoplasmic" evidence="7">
    <location>
        <begin position="263"/>
        <end position="301"/>
    </location>
</feature>
<feature type="short sequence motif" description="NPA 1" evidence="13">
    <location>
        <begin position="82"/>
        <end position="84"/>
    </location>
</feature>
<feature type="short sequence motif" description="NPA 2" evidence="13">
    <location>
        <begin position="214"/>
        <end position="216"/>
    </location>
</feature>
<feature type="site" description="pH-sensor" evidence="7">
    <location>
        <position position="80"/>
    </location>
</feature>
<feature type="glycosylation site" description="N-linked (GlcNAc...) asparagine" evidence="1">
    <location>
        <position position="128"/>
    </location>
</feature>
<feature type="glycosylation site" description="N-linked (GlcNAc...) asparagine" evidence="5">
    <location>
        <position position="133"/>
    </location>
</feature>
<feature type="splice variant" id="VSP_010211" description="In isoform 2." evidence="8">
    <original>SAGNGWWWVPVVAPLVGATVGTATYQLLVALHHPEGPEPAQDLVSAQHKASELETPASAQMLECKL</original>
    <variation>RWETDSPGAGLHSPSSAKGSVPGSTALCL</variation>
    <location>
        <begin position="236"/>
        <end position="301"/>
    </location>
</feature>
<feature type="sequence variant" id="VAR_033519" description="In dbSNP:rs6668968.">
    <original>R</original>
    <variation>Q</variation>
    <location>
        <position position="15"/>
    </location>
</feature>
<feature type="sequence variant" id="VAR_050063" description="In dbSNP:rs6685323.">
    <original>H</original>
    <variation>Y</variation>
    <location>
        <position position="123"/>
    </location>
</feature>
<feature type="mutagenesis site" description="Loss of glycerol channel activity." evidence="7">
    <original>E</original>
    <variation>Q</variation>
    <location>
        <position position="27"/>
    </location>
</feature>
<feature type="mutagenesis site" description="Increased glycerol channel activity at acidic pH." evidence="7">
    <original>G</original>
    <variation>A</variation>
    <location>
        <position position="73"/>
    </location>
</feature>
<feature type="mutagenesis site" description="Loss of glycerol channel activity." evidence="7">
    <original>G</original>
    <variation>F</variation>
    <location>
        <position position="73"/>
    </location>
</feature>
<feature type="mutagenesis site" description="Decreased glycerol channel activity." evidence="7">
    <original>S</original>
    <variation>A</variation>
    <variation>D</variation>
    <location>
        <position position="77"/>
    </location>
</feature>
<feature type="mutagenesis site" description="Loss of glycerol channel activity." evidence="7">
    <original>H</original>
    <variation>A</variation>
    <location>
        <position position="80"/>
    </location>
</feature>
<feature type="mutagenesis site" description="Decreased glycerol channel activity." evidence="7">
    <original>F</original>
    <variation>A</variation>
    <location>
        <position position="85"/>
    </location>
</feature>
<feature type="mutagenesis site" description="Loss of glycerol channel activity." evidence="7">
    <original>R</original>
    <variation>A</variation>
    <location>
        <position position="94"/>
    </location>
</feature>
<feature type="mutagenesis site" description="Abolishes N-glycosylation." evidence="5">
    <original>N</original>
    <variation>Q</variation>
    <location>
        <position position="133"/>
    </location>
</feature>
<feature type="helix" evidence="16">
    <location>
        <begin position="19"/>
        <end position="47"/>
    </location>
</feature>
<feature type="turn" evidence="16">
    <location>
        <begin position="48"/>
        <end position="50"/>
    </location>
</feature>
<feature type="helix" evidence="16">
    <location>
        <begin position="55"/>
        <end position="72"/>
    </location>
</feature>
<feature type="helix" evidence="16">
    <location>
        <begin position="83"/>
        <end position="91"/>
    </location>
</feature>
<feature type="helix" evidence="16">
    <location>
        <begin position="97"/>
        <end position="99"/>
    </location>
</feature>
<feature type="helix" evidence="16">
    <location>
        <begin position="100"/>
        <end position="121"/>
    </location>
</feature>
<feature type="helix" evidence="16">
    <location>
        <begin position="123"/>
        <end position="130"/>
    </location>
</feature>
<feature type="strand" evidence="16">
    <location>
        <begin position="136"/>
        <end position="138"/>
    </location>
</feature>
<feature type="helix" evidence="16">
    <location>
        <begin position="143"/>
        <end position="145"/>
    </location>
</feature>
<feature type="helix" evidence="16">
    <location>
        <begin position="156"/>
        <end position="178"/>
    </location>
</feature>
<feature type="helix" evidence="16">
    <location>
        <begin position="190"/>
        <end position="205"/>
    </location>
</feature>
<feature type="turn" evidence="16">
    <location>
        <begin position="207"/>
        <end position="209"/>
    </location>
</feature>
<feature type="helix" evidence="16">
    <location>
        <begin position="215"/>
        <end position="227"/>
    </location>
</feature>
<feature type="turn" evidence="16">
    <location>
        <begin position="228"/>
        <end position="230"/>
    </location>
</feature>
<feature type="helix" evidence="16">
    <location>
        <begin position="233"/>
        <end position="240"/>
    </location>
</feature>
<feature type="helix" evidence="16">
    <location>
        <begin position="241"/>
        <end position="243"/>
    </location>
</feature>
<feature type="helix" evidence="16">
    <location>
        <begin position="244"/>
        <end position="267"/>
    </location>
</feature>
<evidence type="ECO:0000255" key="1"/>
<evidence type="ECO:0000269" key="2">
    <source>
    </source>
</evidence>
<evidence type="ECO:0000269" key="3">
    <source>
    </source>
</evidence>
<evidence type="ECO:0000269" key="4">
    <source>
    </source>
</evidence>
<evidence type="ECO:0000269" key="5">
    <source>
    </source>
</evidence>
<evidence type="ECO:0000269" key="6">
    <source>
    </source>
</evidence>
<evidence type="ECO:0000269" key="7">
    <source>
    </source>
</evidence>
<evidence type="ECO:0000303" key="8">
    <source>
    </source>
</evidence>
<evidence type="ECO:0000303" key="9">
    <source>
    </source>
</evidence>
<evidence type="ECO:0000305" key="10"/>
<evidence type="ECO:0000305" key="11">
    <source>
    </source>
</evidence>
<evidence type="ECO:0000305" key="12">
    <source>
    </source>
</evidence>
<evidence type="ECO:0000305" key="13">
    <source>
    </source>
</evidence>
<evidence type="ECO:0000312" key="14">
    <source>
        <dbReference type="HGNC" id="HGNC:16029"/>
    </source>
</evidence>
<evidence type="ECO:0007744" key="15">
    <source>
        <dbReference type="PDB" id="6F7H"/>
    </source>
</evidence>
<evidence type="ECO:0007829" key="16">
    <source>
        <dbReference type="PDB" id="6F7H"/>
    </source>
</evidence>
<dbReference type="EMBL" id="AF159174">
    <property type="protein sequence ID" value="AAL25998.1"/>
    <property type="molecule type" value="mRNA"/>
</dbReference>
<dbReference type="EMBL" id="AB066105">
    <property type="protein sequence ID" value="BAB91223.1"/>
    <property type="molecule type" value="mRNA"/>
</dbReference>
<dbReference type="EMBL" id="AL354980">
    <property type="status" value="NOT_ANNOTATED_CDS"/>
    <property type="molecule type" value="Genomic_DNA"/>
</dbReference>
<dbReference type="EMBL" id="BC069607">
    <property type="protein sequence ID" value="AAH69607.1"/>
    <property type="molecule type" value="mRNA"/>
</dbReference>
<dbReference type="EMBL" id="BC074896">
    <property type="protein sequence ID" value="AAH74896.1"/>
    <property type="molecule type" value="mRNA"/>
</dbReference>
<dbReference type="EMBL" id="BC074897">
    <property type="protein sequence ID" value="AAH74897.1"/>
    <property type="molecule type" value="mRNA"/>
</dbReference>
<dbReference type="CCDS" id="CCDS1065.1">
    <molecule id="Q96PS8-1"/>
</dbReference>
<dbReference type="PIR" id="JC7772">
    <property type="entry name" value="JC7772"/>
</dbReference>
<dbReference type="RefSeq" id="NP_536354.2">
    <molecule id="Q96PS8-1"/>
    <property type="nucleotide sequence ID" value="NM_080429.2"/>
</dbReference>
<dbReference type="PDB" id="6F7H">
    <property type="method" value="X-ray"/>
    <property type="resolution" value="2.30 A"/>
    <property type="chains" value="A/B/C/D=1-301"/>
</dbReference>
<dbReference type="PDBsum" id="6F7H"/>
<dbReference type="SMR" id="Q96PS8"/>
<dbReference type="BioGRID" id="124627">
    <property type="interactions" value="21"/>
</dbReference>
<dbReference type="FunCoup" id="Q96PS8">
    <property type="interactions" value="50"/>
</dbReference>
<dbReference type="IntAct" id="Q96PS8">
    <property type="interactions" value="20"/>
</dbReference>
<dbReference type="STRING" id="9606.ENSP00000318355"/>
<dbReference type="TCDB" id="1.A.8.9.5">
    <property type="family name" value="the major intrinsic protein (mip) family"/>
</dbReference>
<dbReference type="GlyCosmos" id="Q96PS8">
    <property type="glycosylation" value="2 sites, No reported glycans"/>
</dbReference>
<dbReference type="GlyGen" id="Q96PS8">
    <property type="glycosylation" value="2 sites"/>
</dbReference>
<dbReference type="iPTMnet" id="Q96PS8"/>
<dbReference type="BioMuta" id="AQP10"/>
<dbReference type="DMDM" id="47117905"/>
<dbReference type="MassIVE" id="Q96PS8"/>
<dbReference type="PaxDb" id="9606-ENSP00000318355"/>
<dbReference type="PeptideAtlas" id="Q96PS8"/>
<dbReference type="Antibodypedia" id="34151">
    <property type="antibodies" value="147 antibodies from 24 providers"/>
</dbReference>
<dbReference type="DNASU" id="89872"/>
<dbReference type="Ensembl" id="ENST00000324978.8">
    <molecule id="Q96PS8-1"/>
    <property type="protein sequence ID" value="ENSP00000318355.3"/>
    <property type="gene ID" value="ENSG00000143595.13"/>
</dbReference>
<dbReference type="Ensembl" id="ENST00000484864.1">
    <molecule id="Q96PS8-2"/>
    <property type="protein sequence ID" value="ENSP00000420341.1"/>
    <property type="gene ID" value="ENSG00000143595.13"/>
</dbReference>
<dbReference type="GeneID" id="89872"/>
<dbReference type="KEGG" id="hsa:89872"/>
<dbReference type="MANE-Select" id="ENST00000324978.8">
    <property type="protein sequence ID" value="ENSP00000318355.3"/>
    <property type="RefSeq nucleotide sequence ID" value="NM_080429.3"/>
    <property type="RefSeq protein sequence ID" value="NP_536354.2"/>
</dbReference>
<dbReference type="UCSC" id="uc001feu.3">
    <molecule id="Q96PS8-1"/>
    <property type="organism name" value="human"/>
</dbReference>
<dbReference type="AGR" id="HGNC:16029"/>
<dbReference type="CTD" id="89872"/>
<dbReference type="DisGeNET" id="89872"/>
<dbReference type="GeneCards" id="AQP10"/>
<dbReference type="HGNC" id="HGNC:16029">
    <property type="gene designation" value="AQP10"/>
</dbReference>
<dbReference type="HPA" id="ENSG00000143595">
    <property type="expression patterns" value="Tissue enriched (intestine)"/>
</dbReference>
<dbReference type="MIM" id="606578">
    <property type="type" value="gene"/>
</dbReference>
<dbReference type="neXtProt" id="NX_Q96PS8"/>
<dbReference type="OpenTargets" id="ENSG00000143595"/>
<dbReference type="PharmGKB" id="PA24919"/>
<dbReference type="VEuPathDB" id="HostDB:ENSG00000143595"/>
<dbReference type="eggNOG" id="KOG0224">
    <property type="taxonomic scope" value="Eukaryota"/>
</dbReference>
<dbReference type="GeneTree" id="ENSGT00940000162648"/>
<dbReference type="HOGENOM" id="CLU_020019_9_1_1"/>
<dbReference type="InParanoid" id="Q96PS8"/>
<dbReference type="OMA" id="KAWDPEY"/>
<dbReference type="OrthoDB" id="3222at2759"/>
<dbReference type="PAN-GO" id="Q96PS8">
    <property type="GO annotations" value="7 GO annotations based on evolutionary models"/>
</dbReference>
<dbReference type="PhylomeDB" id="Q96PS8"/>
<dbReference type="TreeFam" id="TF313173"/>
<dbReference type="PathwayCommons" id="Q96PS8"/>
<dbReference type="Reactome" id="R-HSA-432047">
    <property type="pathway name" value="Passive transport by Aquaporins"/>
</dbReference>
<dbReference type="SignaLink" id="Q96PS8"/>
<dbReference type="BioGRID-ORCS" id="89872">
    <property type="hits" value="17 hits in 1159 CRISPR screens"/>
</dbReference>
<dbReference type="GenomeRNAi" id="89872"/>
<dbReference type="Pharos" id="Q96PS8">
    <property type="development level" value="Tbio"/>
</dbReference>
<dbReference type="PRO" id="PR:Q96PS8"/>
<dbReference type="Proteomes" id="UP000005640">
    <property type="component" value="Chromosome 1"/>
</dbReference>
<dbReference type="RNAct" id="Q96PS8">
    <property type="molecule type" value="protein"/>
</dbReference>
<dbReference type="Bgee" id="ENSG00000143595">
    <property type="expression patterns" value="Expressed in jejunal mucosa and 44 other cell types or tissues"/>
</dbReference>
<dbReference type="GO" id="GO:0016324">
    <property type="term" value="C:apical plasma membrane"/>
    <property type="evidence" value="ECO:0000314"/>
    <property type="project" value="UniProtKB"/>
</dbReference>
<dbReference type="GO" id="GO:0016323">
    <property type="term" value="C:basolateral plasma membrane"/>
    <property type="evidence" value="ECO:0000318"/>
    <property type="project" value="GO_Central"/>
</dbReference>
<dbReference type="GO" id="GO:0043231">
    <property type="term" value="C:intracellular membrane-bounded organelle"/>
    <property type="evidence" value="ECO:0000314"/>
    <property type="project" value="HPA"/>
</dbReference>
<dbReference type="GO" id="GO:0005811">
    <property type="term" value="C:lipid droplet"/>
    <property type="evidence" value="ECO:0007669"/>
    <property type="project" value="UniProtKB-SubCell"/>
</dbReference>
<dbReference type="GO" id="GO:0005886">
    <property type="term" value="C:plasma membrane"/>
    <property type="evidence" value="ECO:0000314"/>
    <property type="project" value="HPA"/>
</dbReference>
<dbReference type="GO" id="GO:0015254">
    <property type="term" value="F:glycerol channel activity"/>
    <property type="evidence" value="ECO:0000314"/>
    <property type="project" value="UniProtKB"/>
</dbReference>
<dbReference type="GO" id="GO:0015250">
    <property type="term" value="F:water channel activity"/>
    <property type="evidence" value="ECO:0000314"/>
    <property type="project" value="UniProtKB"/>
</dbReference>
<dbReference type="GO" id="GO:0015793">
    <property type="term" value="P:glycerol transmembrane transport"/>
    <property type="evidence" value="ECO:0000314"/>
    <property type="project" value="UniProtKB"/>
</dbReference>
<dbReference type="GO" id="GO:0051289">
    <property type="term" value="P:protein homotetramerization"/>
    <property type="evidence" value="ECO:0000314"/>
    <property type="project" value="UniProtKB"/>
</dbReference>
<dbReference type="GO" id="GO:0009636">
    <property type="term" value="P:response to toxic substance"/>
    <property type="evidence" value="ECO:0000314"/>
    <property type="project" value="UniProtKB"/>
</dbReference>
<dbReference type="GO" id="GO:0006833">
    <property type="term" value="P:water transport"/>
    <property type="evidence" value="ECO:0000314"/>
    <property type="project" value="UniProtKB"/>
</dbReference>
<dbReference type="CDD" id="cd00333">
    <property type="entry name" value="MIP"/>
    <property type="match status" value="1"/>
</dbReference>
<dbReference type="FunFam" id="1.20.1080.10:FF:000005">
    <property type="entry name" value="Aquaporin 3"/>
    <property type="match status" value="1"/>
</dbReference>
<dbReference type="Gene3D" id="1.20.1080.10">
    <property type="entry name" value="Glycerol uptake facilitator protein"/>
    <property type="match status" value="1"/>
</dbReference>
<dbReference type="InterPro" id="IPR023271">
    <property type="entry name" value="Aquaporin-like"/>
</dbReference>
<dbReference type="InterPro" id="IPR026252">
    <property type="entry name" value="Aquaporin_10"/>
</dbReference>
<dbReference type="InterPro" id="IPR000425">
    <property type="entry name" value="MIP"/>
</dbReference>
<dbReference type="InterPro" id="IPR050363">
    <property type="entry name" value="MIP/Aquaporin"/>
</dbReference>
<dbReference type="InterPro" id="IPR022357">
    <property type="entry name" value="MIP_CS"/>
</dbReference>
<dbReference type="NCBIfam" id="TIGR00861">
    <property type="entry name" value="MIP"/>
    <property type="match status" value="1"/>
</dbReference>
<dbReference type="PANTHER" id="PTHR43829">
    <property type="entry name" value="AQUAPORIN OR AQUAGLYCEROPORIN RELATED"/>
    <property type="match status" value="1"/>
</dbReference>
<dbReference type="PANTHER" id="PTHR43829:SF13">
    <property type="entry name" value="AQUAPORIN-10"/>
    <property type="match status" value="1"/>
</dbReference>
<dbReference type="Pfam" id="PF00230">
    <property type="entry name" value="MIP"/>
    <property type="match status" value="1"/>
</dbReference>
<dbReference type="PRINTS" id="PR02022">
    <property type="entry name" value="AQUAPORIN10M"/>
</dbReference>
<dbReference type="PRINTS" id="PR00783">
    <property type="entry name" value="MINTRINSICP"/>
</dbReference>
<dbReference type="SUPFAM" id="SSF81338">
    <property type="entry name" value="Aquaporin-like"/>
    <property type="match status" value="1"/>
</dbReference>
<dbReference type="PROSITE" id="PS00221">
    <property type="entry name" value="MIP"/>
    <property type="match status" value="1"/>
</dbReference>
<reference key="1">
    <citation type="journal article" date="2001" name="Biochem. Biophys. Res. Commun.">
        <title>Cloning of a new aquaporin (AQP10) abundantly expressed in duodenum and jejunum.</title>
        <authorList>
            <person name="Hatakeyama S."/>
            <person name="Yoshida Y."/>
            <person name="Tani T."/>
            <person name="Koyama Y."/>
            <person name="Nihei K."/>
            <person name="Ohshiro K."/>
            <person name="Kamiie J."/>
            <person name="Yaoita E."/>
            <person name="Suda T."/>
            <person name="Hatakeyama K."/>
            <person name="Yamamoto T."/>
        </authorList>
    </citation>
    <scope>NUCLEOTIDE SEQUENCE [MRNA] (ISOFORM 2)</scope>
    <scope>FUNCTION</scope>
    <scope>TRANSPORTER ACTIVITY</scope>
    <scope>SUBCELLULAR LOCATION</scope>
    <scope>TISSUE SPECIFICITY</scope>
    <scope>CAUTION (ISOFORM 2)</scope>
    <source>
        <tissue>Jejunum</tissue>
    </source>
</reference>
<reference key="2">
    <citation type="journal article" date="2002" name="Biochim. Biophys. Acta">
        <title>Cloning and identification of a new member of water channel (AQP10) as an aquaglyceroporin.</title>
        <authorList>
            <person name="Ishibashi K."/>
            <person name="Morinaga T."/>
            <person name="Kuwahara M."/>
            <person name="Sasaki S."/>
            <person name="Imai M."/>
        </authorList>
    </citation>
    <scope>NUCLEOTIDE SEQUENCE [MRNA] (ISOFORM 1)</scope>
    <scope>FUNCTION</scope>
    <scope>TRANSPORTER ACTIVITY</scope>
    <scope>SUBCELLULAR LOCATION</scope>
    <scope>TISSUE SPECIFICITY</scope>
</reference>
<reference key="3">
    <citation type="journal article" date="2006" name="Nature">
        <title>The DNA sequence and biological annotation of human chromosome 1.</title>
        <authorList>
            <person name="Gregory S.G."/>
            <person name="Barlow K.F."/>
            <person name="McLay K.E."/>
            <person name="Kaul R."/>
            <person name="Swarbreck D."/>
            <person name="Dunham A."/>
            <person name="Scott C.E."/>
            <person name="Howe K.L."/>
            <person name="Woodfine K."/>
            <person name="Spencer C.C.A."/>
            <person name="Jones M.C."/>
            <person name="Gillson C."/>
            <person name="Searle S."/>
            <person name="Zhou Y."/>
            <person name="Kokocinski F."/>
            <person name="McDonald L."/>
            <person name="Evans R."/>
            <person name="Phillips K."/>
            <person name="Atkinson A."/>
            <person name="Cooper R."/>
            <person name="Jones C."/>
            <person name="Hall R.E."/>
            <person name="Andrews T.D."/>
            <person name="Lloyd C."/>
            <person name="Ainscough R."/>
            <person name="Almeida J.P."/>
            <person name="Ambrose K.D."/>
            <person name="Anderson F."/>
            <person name="Andrew R.W."/>
            <person name="Ashwell R.I.S."/>
            <person name="Aubin K."/>
            <person name="Babbage A.K."/>
            <person name="Bagguley C.L."/>
            <person name="Bailey J."/>
            <person name="Beasley H."/>
            <person name="Bethel G."/>
            <person name="Bird C.P."/>
            <person name="Bray-Allen S."/>
            <person name="Brown J.Y."/>
            <person name="Brown A.J."/>
            <person name="Buckley D."/>
            <person name="Burton J."/>
            <person name="Bye J."/>
            <person name="Carder C."/>
            <person name="Chapman J.C."/>
            <person name="Clark S.Y."/>
            <person name="Clarke G."/>
            <person name="Clee C."/>
            <person name="Cobley V."/>
            <person name="Collier R.E."/>
            <person name="Corby N."/>
            <person name="Coville G.J."/>
            <person name="Davies J."/>
            <person name="Deadman R."/>
            <person name="Dunn M."/>
            <person name="Earthrowl M."/>
            <person name="Ellington A.G."/>
            <person name="Errington H."/>
            <person name="Frankish A."/>
            <person name="Frankland J."/>
            <person name="French L."/>
            <person name="Garner P."/>
            <person name="Garnett J."/>
            <person name="Gay L."/>
            <person name="Ghori M.R.J."/>
            <person name="Gibson R."/>
            <person name="Gilby L.M."/>
            <person name="Gillett W."/>
            <person name="Glithero R.J."/>
            <person name="Grafham D.V."/>
            <person name="Griffiths C."/>
            <person name="Griffiths-Jones S."/>
            <person name="Grocock R."/>
            <person name="Hammond S."/>
            <person name="Harrison E.S.I."/>
            <person name="Hart E."/>
            <person name="Haugen E."/>
            <person name="Heath P.D."/>
            <person name="Holmes S."/>
            <person name="Holt K."/>
            <person name="Howden P.J."/>
            <person name="Hunt A.R."/>
            <person name="Hunt S.E."/>
            <person name="Hunter G."/>
            <person name="Isherwood J."/>
            <person name="James R."/>
            <person name="Johnson C."/>
            <person name="Johnson D."/>
            <person name="Joy A."/>
            <person name="Kay M."/>
            <person name="Kershaw J.K."/>
            <person name="Kibukawa M."/>
            <person name="Kimberley A.M."/>
            <person name="King A."/>
            <person name="Knights A.J."/>
            <person name="Lad H."/>
            <person name="Laird G."/>
            <person name="Lawlor S."/>
            <person name="Leongamornlert D.A."/>
            <person name="Lloyd D.M."/>
            <person name="Loveland J."/>
            <person name="Lovell J."/>
            <person name="Lush M.J."/>
            <person name="Lyne R."/>
            <person name="Martin S."/>
            <person name="Mashreghi-Mohammadi M."/>
            <person name="Matthews L."/>
            <person name="Matthews N.S.W."/>
            <person name="McLaren S."/>
            <person name="Milne S."/>
            <person name="Mistry S."/>
            <person name="Moore M.J.F."/>
            <person name="Nickerson T."/>
            <person name="O'Dell C.N."/>
            <person name="Oliver K."/>
            <person name="Palmeiri A."/>
            <person name="Palmer S.A."/>
            <person name="Parker A."/>
            <person name="Patel D."/>
            <person name="Pearce A.V."/>
            <person name="Peck A.I."/>
            <person name="Pelan S."/>
            <person name="Phelps K."/>
            <person name="Phillimore B.J."/>
            <person name="Plumb R."/>
            <person name="Rajan J."/>
            <person name="Raymond C."/>
            <person name="Rouse G."/>
            <person name="Saenphimmachak C."/>
            <person name="Sehra H.K."/>
            <person name="Sheridan E."/>
            <person name="Shownkeen R."/>
            <person name="Sims S."/>
            <person name="Skuce C.D."/>
            <person name="Smith M."/>
            <person name="Steward C."/>
            <person name="Subramanian S."/>
            <person name="Sycamore N."/>
            <person name="Tracey A."/>
            <person name="Tromans A."/>
            <person name="Van Helmond Z."/>
            <person name="Wall M."/>
            <person name="Wallis J.M."/>
            <person name="White S."/>
            <person name="Whitehead S.L."/>
            <person name="Wilkinson J.E."/>
            <person name="Willey D.L."/>
            <person name="Williams H."/>
            <person name="Wilming L."/>
            <person name="Wray P.W."/>
            <person name="Wu Z."/>
            <person name="Coulson A."/>
            <person name="Vaudin M."/>
            <person name="Sulston J.E."/>
            <person name="Durbin R.M."/>
            <person name="Hubbard T."/>
            <person name="Wooster R."/>
            <person name="Dunham I."/>
            <person name="Carter N.P."/>
            <person name="McVean G."/>
            <person name="Ross M.T."/>
            <person name="Harrow J."/>
            <person name="Olson M.V."/>
            <person name="Beck S."/>
            <person name="Rogers J."/>
            <person name="Bentley D.R."/>
        </authorList>
    </citation>
    <scope>NUCLEOTIDE SEQUENCE [LARGE SCALE GENOMIC DNA]</scope>
</reference>
<reference key="4">
    <citation type="journal article" date="2004" name="Genome Res.">
        <title>The status, quality, and expansion of the NIH full-length cDNA project: the Mammalian Gene Collection (MGC).</title>
        <authorList>
            <consortium name="The MGC Project Team"/>
        </authorList>
    </citation>
    <scope>NUCLEOTIDE SEQUENCE [LARGE SCALE MRNA] (ISOFORM 1)</scope>
    <source>
        <tissue>Lung</tissue>
    </source>
</reference>
<reference key="5">
    <citation type="journal article" date="2004" name="Histochem. Cell Biol.">
        <title>Immunohistochemical localization of aquaporin 10 in the apical membranes of the human ileum: a potential pathway for luminal water and small solute absorption.</title>
        <authorList>
            <person name="Mobasheri A."/>
            <person name="Shakibaei M."/>
            <person name="Marples D."/>
        </authorList>
    </citation>
    <scope>SUBCELLULAR LOCATION</scope>
    <scope>TISSUE SPECIFICITY</scope>
</reference>
<reference key="6">
    <citation type="journal article" date="2011" name="J. Biol. Chem.">
        <title>Glycosylation increases the thermostability of human aquaporin 10 protein.</title>
        <authorList>
            <person name="Oeberg F."/>
            <person name="Sjoehamn J."/>
            <person name="Fischer G."/>
            <person name="Moberg A."/>
            <person name="Pedersen A."/>
            <person name="Neutze R."/>
            <person name="Hedfalk K."/>
        </authorList>
    </citation>
    <scope>FUNCTION</scope>
    <scope>TRANSPORTER ACTIVITY</scope>
    <scope>GLYCOSYLATION AT ASN-133</scope>
    <scope>MISCELLANEOUS</scope>
    <scope>IDENTIFICATION BY MASS SPECTROMETRY</scope>
    <scope>MUTAGENESIS OF ASN-133</scope>
</reference>
<reference key="7">
    <citation type="journal article" date="2013" name="PLoS ONE">
        <title>Aquaporin-10 represents an alternative pathway for glycerol efflux from human adipocytes.</title>
        <authorList>
            <person name="Laforenza U."/>
            <person name="Scaffino M.F."/>
            <person name="Gastaldi G."/>
        </authorList>
    </citation>
    <scope>FUNCTION</scope>
    <scope>TRANSPORTER ACTIVITY</scope>
    <scope>SUBCELLULAR LOCATION</scope>
    <scope>TISSUE SPECIFICITY</scope>
</reference>
<reference evidence="15" key="8">
    <citation type="journal article" date="2018" name="Nat. Commun.">
        <title>Human adipose glycerol flux is regulated by a pH gate in AQP10.</title>
        <authorList>
            <person name="Gotfryd K."/>
            <person name="Mosca A.F."/>
            <person name="Missel J.W."/>
            <person name="Truelsen S.F."/>
            <person name="Wang K."/>
            <person name="Spulber M."/>
            <person name="Krabbe S."/>
            <person name="Helix-Nielsen C."/>
            <person name="Laforenza U."/>
            <person name="Soveral G."/>
            <person name="Pedersen P.A."/>
            <person name="Gourdon P."/>
        </authorList>
    </citation>
    <scope>X-RAY CRYSTALLOGRAPHY (2.30 ANGSTROMS)</scope>
    <scope>FUNCTION</scope>
    <scope>TRANSPORTER ACTIVITY</scope>
    <scope>ACTIVITY REGULATION</scope>
    <scope>SUBCELLULAR LOCATION</scope>
    <scope>TOPOLOGY</scope>
    <scope>SUBUNIT</scope>
    <scope>DOMAIN</scope>
    <scope>SITE</scope>
    <scope>MUTAGENESIS OF GLU-27; GLY-73; SER-77; HIS-80; PHE-85 AND ARG-94</scope>
</reference>
<keyword id="KW-0002">3D-structure</keyword>
<keyword id="KW-0025">Alternative splicing</keyword>
<keyword id="KW-1003">Cell membrane</keyword>
<keyword id="KW-0325">Glycoprotein</keyword>
<keyword id="KW-0551">Lipid droplet</keyword>
<keyword id="KW-0472">Membrane</keyword>
<keyword id="KW-1267">Proteomics identification</keyword>
<keyword id="KW-1185">Reference proteome</keyword>
<keyword id="KW-0677">Repeat</keyword>
<keyword id="KW-0812">Transmembrane</keyword>
<keyword id="KW-1133">Transmembrane helix</keyword>
<keyword id="KW-0813">Transport</keyword>